<gene>
    <name evidence="1" type="primary">trpB</name>
    <name type="ordered locus">Lcho_1682</name>
</gene>
<proteinExistence type="inferred from homology"/>
<protein>
    <recommendedName>
        <fullName evidence="1">Tryptophan synthase beta chain</fullName>
        <ecNumber evidence="1">4.2.1.20</ecNumber>
    </recommendedName>
</protein>
<name>TRPB_LEPCP</name>
<evidence type="ECO:0000255" key="1">
    <source>
        <dbReference type="HAMAP-Rule" id="MF_00133"/>
    </source>
</evidence>
<comment type="function">
    <text evidence="1">The beta subunit is responsible for the synthesis of L-tryptophan from indole and L-serine.</text>
</comment>
<comment type="catalytic activity">
    <reaction evidence="1">
        <text>(1S,2R)-1-C-(indol-3-yl)glycerol 3-phosphate + L-serine = D-glyceraldehyde 3-phosphate + L-tryptophan + H2O</text>
        <dbReference type="Rhea" id="RHEA:10532"/>
        <dbReference type="ChEBI" id="CHEBI:15377"/>
        <dbReference type="ChEBI" id="CHEBI:33384"/>
        <dbReference type="ChEBI" id="CHEBI:57912"/>
        <dbReference type="ChEBI" id="CHEBI:58866"/>
        <dbReference type="ChEBI" id="CHEBI:59776"/>
        <dbReference type="EC" id="4.2.1.20"/>
    </reaction>
</comment>
<comment type="cofactor">
    <cofactor evidence="1">
        <name>pyridoxal 5'-phosphate</name>
        <dbReference type="ChEBI" id="CHEBI:597326"/>
    </cofactor>
</comment>
<comment type="pathway">
    <text evidence="1">Amino-acid biosynthesis; L-tryptophan biosynthesis; L-tryptophan from chorismate: step 5/5.</text>
</comment>
<comment type="subunit">
    <text evidence="1">Tetramer of two alpha and two beta chains.</text>
</comment>
<comment type="similarity">
    <text evidence="1">Belongs to the TrpB family.</text>
</comment>
<keyword id="KW-0028">Amino-acid biosynthesis</keyword>
<keyword id="KW-0057">Aromatic amino acid biosynthesis</keyword>
<keyword id="KW-0456">Lyase</keyword>
<keyword id="KW-0663">Pyridoxal phosphate</keyword>
<keyword id="KW-1185">Reference proteome</keyword>
<keyword id="KW-0822">Tryptophan biosynthesis</keyword>
<sequence length="428" mass="46286">MFDYQQPDARGHFGIYGGSFVAETLSHALDELNAAYERYRHDPEFIAEFRNELAHFVGRPSPVYHAARMSREVGGAQIYLKREDLNHTGAHKINNTIGQALLARRMGKPRVIAETGAGQHGVATATICARYGMECVVYMGSEDVKRQSPNVYRMNLLGARVVPVESGSKTLKDALNEAMRDWVTNVENTFYIIGTVAGPHPYPAMVRDFQRVIGDECLVQMPALAGRQPDAVVACVGGGSNAMGIFYPYIPHEGVRLIGVEAAGEGMESGKHSASLQRGSPGVLHGNRTYVLQDANGQITETHSVSAGLDYPGVGPEHAYLKDIGRAEYVGITDAEALQAFHYLCRAEGIIPALESSHAVAYAMKLAKTMRPDQHVLVNLSGRGDKDIGTVADLSGADFYCRPSCRGQSVKGGDPSVVEIQRKAGGVQ</sequence>
<accession>B1XY48</accession>
<reference key="1">
    <citation type="submission" date="2008-03" db="EMBL/GenBank/DDBJ databases">
        <title>Complete sequence of Leptothrix cholodnii SP-6.</title>
        <authorList>
            <consortium name="US DOE Joint Genome Institute"/>
            <person name="Copeland A."/>
            <person name="Lucas S."/>
            <person name="Lapidus A."/>
            <person name="Glavina del Rio T."/>
            <person name="Dalin E."/>
            <person name="Tice H."/>
            <person name="Bruce D."/>
            <person name="Goodwin L."/>
            <person name="Pitluck S."/>
            <person name="Chertkov O."/>
            <person name="Brettin T."/>
            <person name="Detter J.C."/>
            <person name="Han C."/>
            <person name="Kuske C.R."/>
            <person name="Schmutz J."/>
            <person name="Larimer F."/>
            <person name="Land M."/>
            <person name="Hauser L."/>
            <person name="Kyrpides N."/>
            <person name="Lykidis A."/>
            <person name="Emerson D."/>
            <person name="Richardson P."/>
        </authorList>
    </citation>
    <scope>NUCLEOTIDE SEQUENCE [LARGE SCALE GENOMIC DNA]</scope>
    <source>
        <strain>ATCC 51168 / LMG 8142 / SP-6</strain>
    </source>
</reference>
<dbReference type="EC" id="4.2.1.20" evidence="1"/>
<dbReference type="EMBL" id="CP001013">
    <property type="protein sequence ID" value="ACB33949.1"/>
    <property type="molecule type" value="Genomic_DNA"/>
</dbReference>
<dbReference type="RefSeq" id="WP_012346710.1">
    <property type="nucleotide sequence ID" value="NC_010524.1"/>
</dbReference>
<dbReference type="SMR" id="B1XY48"/>
<dbReference type="STRING" id="395495.Lcho_1682"/>
<dbReference type="KEGG" id="lch:Lcho_1682"/>
<dbReference type="eggNOG" id="COG0133">
    <property type="taxonomic scope" value="Bacteria"/>
</dbReference>
<dbReference type="HOGENOM" id="CLU_016734_3_1_4"/>
<dbReference type="OrthoDB" id="9766131at2"/>
<dbReference type="UniPathway" id="UPA00035">
    <property type="reaction ID" value="UER00044"/>
</dbReference>
<dbReference type="Proteomes" id="UP000001693">
    <property type="component" value="Chromosome"/>
</dbReference>
<dbReference type="GO" id="GO:0005737">
    <property type="term" value="C:cytoplasm"/>
    <property type="evidence" value="ECO:0007669"/>
    <property type="project" value="TreeGrafter"/>
</dbReference>
<dbReference type="GO" id="GO:0004834">
    <property type="term" value="F:tryptophan synthase activity"/>
    <property type="evidence" value="ECO:0007669"/>
    <property type="project" value="UniProtKB-UniRule"/>
</dbReference>
<dbReference type="CDD" id="cd06446">
    <property type="entry name" value="Trp-synth_B"/>
    <property type="match status" value="1"/>
</dbReference>
<dbReference type="FunFam" id="3.40.50.1100:FF:000001">
    <property type="entry name" value="Tryptophan synthase beta chain"/>
    <property type="match status" value="1"/>
</dbReference>
<dbReference type="FunFam" id="3.40.50.1100:FF:000004">
    <property type="entry name" value="Tryptophan synthase beta chain"/>
    <property type="match status" value="1"/>
</dbReference>
<dbReference type="Gene3D" id="3.40.50.1100">
    <property type="match status" value="2"/>
</dbReference>
<dbReference type="HAMAP" id="MF_00133">
    <property type="entry name" value="Trp_synth_beta"/>
    <property type="match status" value="1"/>
</dbReference>
<dbReference type="InterPro" id="IPR006653">
    <property type="entry name" value="Trp_synth_b_CS"/>
</dbReference>
<dbReference type="InterPro" id="IPR006654">
    <property type="entry name" value="Trp_synth_beta"/>
</dbReference>
<dbReference type="InterPro" id="IPR023026">
    <property type="entry name" value="Trp_synth_beta/beta-like"/>
</dbReference>
<dbReference type="InterPro" id="IPR001926">
    <property type="entry name" value="TrpB-like_PALP"/>
</dbReference>
<dbReference type="InterPro" id="IPR036052">
    <property type="entry name" value="TrpB-like_PALP_sf"/>
</dbReference>
<dbReference type="NCBIfam" id="TIGR00263">
    <property type="entry name" value="trpB"/>
    <property type="match status" value="1"/>
</dbReference>
<dbReference type="PANTHER" id="PTHR48077:SF3">
    <property type="entry name" value="TRYPTOPHAN SYNTHASE"/>
    <property type="match status" value="1"/>
</dbReference>
<dbReference type="PANTHER" id="PTHR48077">
    <property type="entry name" value="TRYPTOPHAN SYNTHASE-RELATED"/>
    <property type="match status" value="1"/>
</dbReference>
<dbReference type="Pfam" id="PF00291">
    <property type="entry name" value="PALP"/>
    <property type="match status" value="1"/>
</dbReference>
<dbReference type="PIRSF" id="PIRSF001413">
    <property type="entry name" value="Trp_syn_beta"/>
    <property type="match status" value="1"/>
</dbReference>
<dbReference type="SUPFAM" id="SSF53686">
    <property type="entry name" value="Tryptophan synthase beta subunit-like PLP-dependent enzymes"/>
    <property type="match status" value="1"/>
</dbReference>
<dbReference type="PROSITE" id="PS00168">
    <property type="entry name" value="TRP_SYNTHASE_BETA"/>
    <property type="match status" value="1"/>
</dbReference>
<organism>
    <name type="scientific">Leptothrix cholodnii (strain ATCC 51168 / LMG 8142 / SP-6)</name>
    <name type="common">Leptothrix discophora (strain SP-6)</name>
    <dbReference type="NCBI Taxonomy" id="395495"/>
    <lineage>
        <taxon>Bacteria</taxon>
        <taxon>Pseudomonadati</taxon>
        <taxon>Pseudomonadota</taxon>
        <taxon>Betaproteobacteria</taxon>
        <taxon>Burkholderiales</taxon>
        <taxon>Sphaerotilaceae</taxon>
        <taxon>Leptothrix</taxon>
    </lineage>
</organism>
<feature type="chain" id="PRO_1000095797" description="Tryptophan synthase beta chain">
    <location>
        <begin position="1"/>
        <end position="428"/>
    </location>
</feature>
<feature type="modified residue" description="N6-(pyridoxal phosphate)lysine" evidence="1">
    <location>
        <position position="92"/>
    </location>
</feature>